<accession>Q9QZM2</accession>
<accession>B1ARB5</accession>
<accession>O35614</accession>
<keyword id="KW-0002">3D-structure</keyword>
<keyword id="KW-0235">DNA replication</keyword>
<keyword id="KW-0238">DNA-binding</keyword>
<keyword id="KW-0496">Mitochondrion</keyword>
<keyword id="KW-1135">Mitochondrion nucleoid</keyword>
<keyword id="KW-1185">Reference proteome</keyword>
<keyword id="KW-0809">Transit peptide</keyword>
<proteinExistence type="evidence at protein level"/>
<dbReference type="EMBL" id="AF177202">
    <property type="protein sequence ID" value="AAD56641.1"/>
    <property type="molecule type" value="mRNA"/>
</dbReference>
<dbReference type="EMBL" id="AL603664">
    <property type="status" value="NOT_ANNOTATED_CDS"/>
    <property type="molecule type" value="Genomic_DNA"/>
</dbReference>
<dbReference type="EMBL" id="AF006072">
    <property type="protein sequence ID" value="AAB62894.1"/>
    <property type="molecule type" value="mRNA"/>
</dbReference>
<dbReference type="CCDS" id="CCDS25561.1"/>
<dbReference type="RefSeq" id="NP_056625.2">
    <property type="nucleotide sequence ID" value="NM_015810.2"/>
</dbReference>
<dbReference type="PDB" id="1G5H">
    <property type="method" value="X-ray"/>
    <property type="resolution" value="1.95 A"/>
    <property type="chains" value="A/B/C/D=17-459"/>
</dbReference>
<dbReference type="PDB" id="1G5I">
    <property type="method" value="X-ray"/>
    <property type="resolution" value="2.30 A"/>
    <property type="chains" value="A/B/C/D=17-459"/>
</dbReference>
<dbReference type="PDB" id="8F69">
    <property type="method" value="X-ray"/>
    <property type="resolution" value="2.20 A"/>
    <property type="chains" value="A/B=35-459"/>
</dbReference>
<dbReference type="PDB" id="8F6B">
    <property type="method" value="X-ray"/>
    <property type="resolution" value="2.75 A"/>
    <property type="chains" value="A/B/C/D/E/F=17-459"/>
</dbReference>
<dbReference type="PDBsum" id="1G5H"/>
<dbReference type="PDBsum" id="1G5I"/>
<dbReference type="PDBsum" id="8F69"/>
<dbReference type="PDBsum" id="8F6B"/>
<dbReference type="SMR" id="Q9QZM2"/>
<dbReference type="ComplexPortal" id="CPX-2094">
    <property type="entry name" value="Mitochondrial DNA polymerase gamma complex"/>
</dbReference>
<dbReference type="FunCoup" id="Q9QZM2">
    <property type="interactions" value="1641"/>
</dbReference>
<dbReference type="STRING" id="10090.ENSMUSP00000021060"/>
<dbReference type="GlyGen" id="Q9QZM2">
    <property type="glycosylation" value="2 sites, 1 N-linked glycan (1 site)"/>
</dbReference>
<dbReference type="iPTMnet" id="Q9QZM2"/>
<dbReference type="PhosphoSitePlus" id="Q9QZM2"/>
<dbReference type="PaxDb" id="10090-ENSMUSP00000021060"/>
<dbReference type="ProteomicsDB" id="277490"/>
<dbReference type="Antibodypedia" id="50586">
    <property type="antibodies" value="171 antibodies from 29 providers"/>
</dbReference>
<dbReference type="DNASU" id="50776"/>
<dbReference type="Ensembl" id="ENSMUST00000021060.6">
    <property type="protein sequence ID" value="ENSMUSP00000021060.6"/>
    <property type="gene ID" value="ENSMUSG00000020718.13"/>
</dbReference>
<dbReference type="GeneID" id="50776"/>
<dbReference type="KEGG" id="mmu:50776"/>
<dbReference type="UCSC" id="uc007lzm.2">
    <property type="organism name" value="mouse"/>
</dbReference>
<dbReference type="AGR" id="MGI:1354947"/>
<dbReference type="CTD" id="11232"/>
<dbReference type="MGI" id="MGI:1354947">
    <property type="gene designation" value="Polg2"/>
</dbReference>
<dbReference type="VEuPathDB" id="HostDB:ENSMUSG00000020718"/>
<dbReference type="eggNOG" id="KOG2298">
    <property type="taxonomic scope" value="Eukaryota"/>
</dbReference>
<dbReference type="GeneTree" id="ENSGT00940000153759"/>
<dbReference type="HOGENOM" id="CLU_055833_0_0_1"/>
<dbReference type="InParanoid" id="Q9QZM2"/>
<dbReference type="OMA" id="WGQEVLE"/>
<dbReference type="OrthoDB" id="57698at2759"/>
<dbReference type="PhylomeDB" id="Q9QZM2"/>
<dbReference type="TreeFam" id="TF103005"/>
<dbReference type="Reactome" id="R-MMU-9913635">
    <property type="pathway name" value="Strand-asynchronous mitochondrial DNA replication"/>
</dbReference>
<dbReference type="BioGRID-ORCS" id="50776">
    <property type="hits" value="33 hits in 114 CRISPR screens"/>
</dbReference>
<dbReference type="ChiTaRS" id="Polg2">
    <property type="organism name" value="mouse"/>
</dbReference>
<dbReference type="EvolutionaryTrace" id="Q9QZM2"/>
<dbReference type="PRO" id="PR:Q9QZM2"/>
<dbReference type="Proteomes" id="UP000000589">
    <property type="component" value="Chromosome 11"/>
</dbReference>
<dbReference type="RNAct" id="Q9QZM2">
    <property type="molecule type" value="protein"/>
</dbReference>
<dbReference type="Bgee" id="ENSMUSG00000020718">
    <property type="expression patterns" value="Expressed in pigmented layer of retina and 224 other cell types or tissues"/>
</dbReference>
<dbReference type="ExpressionAtlas" id="Q9QZM2">
    <property type="expression patterns" value="baseline and differential"/>
</dbReference>
<dbReference type="GO" id="GO:0005760">
    <property type="term" value="C:gamma DNA polymerase complex"/>
    <property type="evidence" value="ECO:0000250"/>
    <property type="project" value="UniProtKB"/>
</dbReference>
<dbReference type="GO" id="GO:0005759">
    <property type="term" value="C:mitochondrial matrix"/>
    <property type="evidence" value="ECO:0000266"/>
    <property type="project" value="ComplexPortal"/>
</dbReference>
<dbReference type="GO" id="GO:0042645">
    <property type="term" value="C:mitochondrial nucleoid"/>
    <property type="evidence" value="ECO:0007669"/>
    <property type="project" value="UniProtKB-SubCell"/>
</dbReference>
<dbReference type="GO" id="GO:0005739">
    <property type="term" value="C:mitochondrion"/>
    <property type="evidence" value="ECO:0007005"/>
    <property type="project" value="MGI"/>
</dbReference>
<dbReference type="GO" id="GO:0070182">
    <property type="term" value="F:DNA polymerase binding"/>
    <property type="evidence" value="ECO:0007669"/>
    <property type="project" value="Ensembl"/>
</dbReference>
<dbReference type="GO" id="GO:0030337">
    <property type="term" value="F:DNA polymerase processivity factor activity"/>
    <property type="evidence" value="ECO:0000250"/>
    <property type="project" value="UniProtKB"/>
</dbReference>
<dbReference type="GO" id="GO:0003887">
    <property type="term" value="F:DNA-directed DNA polymerase activity"/>
    <property type="evidence" value="ECO:0000314"/>
    <property type="project" value="MGI"/>
</dbReference>
<dbReference type="GO" id="GO:0003690">
    <property type="term" value="F:double-stranded DNA binding"/>
    <property type="evidence" value="ECO:0007669"/>
    <property type="project" value="Ensembl"/>
</dbReference>
<dbReference type="GO" id="GO:0042802">
    <property type="term" value="F:identical protein binding"/>
    <property type="evidence" value="ECO:0000353"/>
    <property type="project" value="IntAct"/>
</dbReference>
<dbReference type="GO" id="GO:0006281">
    <property type="term" value="P:DNA repair"/>
    <property type="evidence" value="ECO:0000304"/>
    <property type="project" value="MGI"/>
</dbReference>
<dbReference type="GO" id="GO:0006260">
    <property type="term" value="P:DNA replication"/>
    <property type="evidence" value="ECO:0000305"/>
    <property type="project" value="MGI"/>
</dbReference>
<dbReference type="GO" id="GO:0001701">
    <property type="term" value="P:in utero embryonic development"/>
    <property type="evidence" value="ECO:0000315"/>
    <property type="project" value="MGI"/>
</dbReference>
<dbReference type="GO" id="GO:0032042">
    <property type="term" value="P:mitochondrial DNA metabolic process"/>
    <property type="evidence" value="ECO:0000315"/>
    <property type="project" value="MGI"/>
</dbReference>
<dbReference type="GO" id="GO:0006264">
    <property type="term" value="P:mitochondrial DNA replication"/>
    <property type="evidence" value="ECO:0000315"/>
    <property type="project" value="MGI"/>
</dbReference>
<dbReference type="GO" id="GO:0007005">
    <property type="term" value="P:mitochondrion organization"/>
    <property type="evidence" value="ECO:0000315"/>
    <property type="project" value="MGI"/>
</dbReference>
<dbReference type="CDD" id="cd00774">
    <property type="entry name" value="GlyRS-like_core"/>
    <property type="match status" value="1"/>
</dbReference>
<dbReference type="CDD" id="cd02426">
    <property type="entry name" value="Pol_gamma_b_Cterm"/>
    <property type="match status" value="1"/>
</dbReference>
<dbReference type="FunFam" id="3.40.50.800:FF:000014">
    <property type="entry name" value="Putative dna polymerase subunit gamma-2 mitochondrial"/>
    <property type="match status" value="1"/>
</dbReference>
<dbReference type="Gene3D" id="3.40.50.800">
    <property type="entry name" value="Anticodon-binding domain"/>
    <property type="match status" value="1"/>
</dbReference>
<dbReference type="Gene3D" id="3.30.930.10">
    <property type="entry name" value="Bira Bifunctional Protein, Domain 2"/>
    <property type="match status" value="1"/>
</dbReference>
<dbReference type="InterPro" id="IPR045864">
    <property type="entry name" value="aa-tRNA-synth_II/BPL/LPL"/>
</dbReference>
<dbReference type="InterPro" id="IPR004154">
    <property type="entry name" value="Anticodon-bd"/>
</dbReference>
<dbReference type="InterPro" id="IPR036621">
    <property type="entry name" value="Anticodon-bd_dom_sf"/>
</dbReference>
<dbReference type="InterPro" id="IPR027031">
    <property type="entry name" value="Gly-tRNA_synthase/POLG2"/>
</dbReference>
<dbReference type="InterPro" id="IPR033731">
    <property type="entry name" value="GlyRS-like_core"/>
</dbReference>
<dbReference type="InterPro" id="IPR042064">
    <property type="entry name" value="POLG2_C"/>
</dbReference>
<dbReference type="PANTHER" id="PTHR10745:SF8">
    <property type="entry name" value="DNA POLYMERASE SUBUNIT GAMMA-2, MITOCHONDRIAL"/>
    <property type="match status" value="1"/>
</dbReference>
<dbReference type="PANTHER" id="PTHR10745">
    <property type="entry name" value="GLYCYL-TRNA SYNTHETASE/DNA POLYMERASE SUBUNIT GAMMA-2"/>
    <property type="match status" value="1"/>
</dbReference>
<dbReference type="Pfam" id="PF03129">
    <property type="entry name" value="HGTP_anticodon"/>
    <property type="match status" value="1"/>
</dbReference>
<dbReference type="SUPFAM" id="SSF52954">
    <property type="entry name" value="Class II aaRS ABD-related"/>
    <property type="match status" value="1"/>
</dbReference>
<dbReference type="SUPFAM" id="SSF55681">
    <property type="entry name" value="Class II aaRS and biotin synthetases"/>
    <property type="match status" value="1"/>
</dbReference>
<reference key="1">
    <citation type="journal article" date="2000" name="Nucleic Acids Res.">
        <title>Protein sequences conserved in prokaryotic aminoacyl-tRNA synthetases are important for the activity of the processivity factor of human mitochondrial DNA polymerase.</title>
        <authorList>
            <person name="Carrodeguas J.A."/>
            <person name="Bogenhagen D.F."/>
        </authorList>
    </citation>
    <scope>NUCLEOTIDE SEQUENCE [MRNA]</scope>
    <source>
        <strain>Swiss Webster / NIH</strain>
    </source>
</reference>
<reference key="2">
    <citation type="journal article" date="2009" name="PLoS Biol.">
        <title>Lineage-specific biology revealed by a finished genome assembly of the mouse.</title>
        <authorList>
            <person name="Church D.M."/>
            <person name="Goodstadt L."/>
            <person name="Hillier L.W."/>
            <person name="Zody M.C."/>
            <person name="Goldstein S."/>
            <person name="She X."/>
            <person name="Bult C.J."/>
            <person name="Agarwala R."/>
            <person name="Cherry J.L."/>
            <person name="DiCuccio M."/>
            <person name="Hlavina W."/>
            <person name="Kapustin Y."/>
            <person name="Meric P."/>
            <person name="Maglott D."/>
            <person name="Birtle Z."/>
            <person name="Marques A.C."/>
            <person name="Graves T."/>
            <person name="Zhou S."/>
            <person name="Teague B."/>
            <person name="Potamousis K."/>
            <person name="Churas C."/>
            <person name="Place M."/>
            <person name="Herschleb J."/>
            <person name="Runnheim R."/>
            <person name="Forrest D."/>
            <person name="Amos-Landgraf J."/>
            <person name="Schwartz D.C."/>
            <person name="Cheng Z."/>
            <person name="Lindblad-Toh K."/>
            <person name="Eichler E.E."/>
            <person name="Ponting C.P."/>
        </authorList>
    </citation>
    <scope>NUCLEOTIDE SEQUENCE [LARGE SCALE GENOMIC DNA]</scope>
    <source>
        <strain>C57BL/6J</strain>
    </source>
</reference>
<reference key="3">
    <citation type="submission" date="1997-05" db="EMBL/GenBank/DDBJ databases">
        <authorList>
            <person name="Kaguni L.S."/>
        </authorList>
    </citation>
    <scope>NUCLEOTIDE SEQUENCE [MRNA] OF 164-459</scope>
</reference>
<reference key="4">
    <citation type="journal article" date="2001" name="Mol. Cell">
        <title>Crystal structure and deletion analysis show that the accessory subunit of mammalian DNA polymerase gamma, Pol gamma B, functions as a homodimer.</title>
        <authorList>
            <person name="Carrodeguas J.A."/>
            <person name="Theis K."/>
            <person name="Bogenhagen D.F."/>
            <person name="Kisker C."/>
        </authorList>
    </citation>
    <scope>X-RAY CRYSTALLOGRAPHY (1.95 ANGSTROMS) OF 1-459</scope>
    <scope>SUBUNIT</scope>
</reference>
<protein>
    <recommendedName>
        <fullName>DNA polymerase subunit gamma-2</fullName>
    </recommendedName>
    <alternativeName>
        <fullName>DNA polymerase gamma accessory 55 kDa subunit</fullName>
        <shortName>p55</shortName>
    </alternativeName>
    <alternativeName>
        <fullName>Mitochondrial DNA polymerase accessory subunit</fullName>
    </alternativeName>
    <alternativeName>
        <fullName>MtPolB</fullName>
    </alternativeName>
    <alternativeName>
        <fullName>PolG-beta</fullName>
    </alternativeName>
</protein>
<evidence type="ECO:0000250" key="1">
    <source>
        <dbReference type="UniProtKB" id="P54098"/>
    </source>
</evidence>
<evidence type="ECO:0000250" key="2">
    <source>
        <dbReference type="UniProtKB" id="Q9UHN1"/>
    </source>
</evidence>
<evidence type="ECO:0000255" key="3"/>
<evidence type="ECO:0000269" key="4">
    <source>
    </source>
</evidence>
<evidence type="ECO:0000305" key="5"/>
<evidence type="ECO:0007829" key="6">
    <source>
        <dbReference type="PDB" id="1G5H"/>
    </source>
</evidence>
<evidence type="ECO:0007829" key="7">
    <source>
        <dbReference type="PDB" id="1G5I"/>
    </source>
</evidence>
<evidence type="ECO:0007829" key="8">
    <source>
        <dbReference type="PDB" id="8F69"/>
    </source>
</evidence>
<comment type="function">
    <text evidence="2">Accessory subunit of DNA polymerase gamma solely responsible for replication of mitochondrial DNA (mtDNA). Acts as an allosteric regulator of the holoenzyme activities. Enhances the polymerase activity and the processivity of POLG by increasing its interactions with the DNA template. Suppresses POLG exonucleolytic proofreading especially toward homopolymeric templates bearing mismatched termini. Binds to single-stranded DNA.</text>
</comment>
<comment type="subunit">
    <text evidence="2 4">Heterotrimer composed of a catalytic subunit and a homodimer of accessory subunits (POLG:POLG2).</text>
</comment>
<comment type="interaction">
    <interactant intactId="EBI-853043">
        <id>Q9QZM2</id>
    </interactant>
    <interactant intactId="EBI-853043">
        <id>Q9QZM2</id>
        <label>Polg2</label>
    </interactant>
    <organismsDiffer>false</organismsDiffer>
    <experiments>2</experiments>
</comment>
<comment type="subcellular location">
    <subcellularLocation>
        <location evidence="1">Mitochondrion</location>
    </subcellularLocation>
    <subcellularLocation>
        <location evidence="1">Mitochondrion matrix</location>
        <location evidence="1">Mitochondrion nucleoid</location>
    </subcellularLocation>
</comment>
<organism>
    <name type="scientific">Mus musculus</name>
    <name type="common">Mouse</name>
    <dbReference type="NCBI Taxonomy" id="10090"/>
    <lineage>
        <taxon>Eukaryota</taxon>
        <taxon>Metazoa</taxon>
        <taxon>Chordata</taxon>
        <taxon>Craniata</taxon>
        <taxon>Vertebrata</taxon>
        <taxon>Euteleostomi</taxon>
        <taxon>Mammalia</taxon>
        <taxon>Eutheria</taxon>
        <taxon>Euarchontoglires</taxon>
        <taxon>Glires</taxon>
        <taxon>Rodentia</taxon>
        <taxon>Myomorpha</taxon>
        <taxon>Muroidea</taxon>
        <taxon>Muridae</taxon>
        <taxon>Murinae</taxon>
        <taxon>Mus</taxon>
        <taxon>Mus</taxon>
    </lineage>
</organism>
<name>DPOG2_MOUSE</name>
<feature type="transit peptide" description="Mitochondrion" evidence="3">
    <location>
        <begin position="1"/>
        <end status="unknown"/>
    </location>
</feature>
<feature type="chain" id="PRO_0000007315" description="DNA polymerase subunit gamma-2">
    <location>
        <begin status="unknown"/>
        <end position="459"/>
    </location>
</feature>
<feature type="sequence conflict" description="In Ref. 1; AAD56641." evidence="5" ref="1">
    <original>F</original>
    <variation>L</variation>
    <location>
        <position position="53"/>
    </location>
</feature>
<feature type="sequence conflict" description="In Ref. 3; AAB62894." evidence="5" ref="3">
    <original>L</original>
    <variation>S</variation>
    <location>
        <position position="226"/>
    </location>
</feature>
<feature type="helix" evidence="6">
    <location>
        <begin position="42"/>
        <end position="49"/>
    </location>
</feature>
<feature type="helix" evidence="6">
    <location>
        <begin position="57"/>
        <end position="60"/>
    </location>
</feature>
<feature type="helix" evidence="6">
    <location>
        <begin position="62"/>
        <end position="67"/>
    </location>
</feature>
<feature type="helix" evidence="6">
    <location>
        <begin position="75"/>
        <end position="92"/>
    </location>
</feature>
<feature type="turn" evidence="6">
    <location>
        <begin position="93"/>
        <end position="95"/>
    </location>
</feature>
<feature type="strand" evidence="6">
    <location>
        <begin position="99"/>
        <end position="101"/>
    </location>
</feature>
<feature type="strand" evidence="6">
    <location>
        <begin position="106"/>
        <end position="108"/>
    </location>
</feature>
<feature type="strand" evidence="6">
    <location>
        <begin position="120"/>
        <end position="122"/>
    </location>
</feature>
<feature type="helix" evidence="6">
    <location>
        <begin position="124"/>
        <end position="131"/>
    </location>
</feature>
<feature type="helix" evidence="6">
    <location>
        <begin position="138"/>
        <end position="151"/>
    </location>
</feature>
<feature type="strand" evidence="7">
    <location>
        <begin position="152"/>
        <end position="155"/>
    </location>
</feature>
<feature type="strand" evidence="8">
    <location>
        <begin position="157"/>
        <end position="159"/>
    </location>
</feature>
<feature type="helix" evidence="6">
    <location>
        <begin position="160"/>
        <end position="165"/>
    </location>
</feature>
<feature type="helix" evidence="6">
    <location>
        <begin position="167"/>
        <end position="173"/>
    </location>
</feature>
<feature type="turn" evidence="6">
    <location>
        <begin position="174"/>
        <end position="176"/>
    </location>
</feature>
<feature type="strand" evidence="6">
    <location>
        <begin position="180"/>
        <end position="192"/>
    </location>
</feature>
<feature type="strand" evidence="6">
    <location>
        <begin position="204"/>
        <end position="217"/>
    </location>
</feature>
<feature type="helix" evidence="6">
    <location>
        <begin position="219"/>
        <end position="238"/>
    </location>
</feature>
<feature type="helix" evidence="6">
    <location>
        <begin position="244"/>
        <end position="246"/>
    </location>
</feature>
<feature type="strand" evidence="6">
    <location>
        <begin position="247"/>
        <end position="253"/>
    </location>
</feature>
<feature type="strand" evidence="6">
    <location>
        <begin position="259"/>
        <end position="267"/>
    </location>
</feature>
<feature type="strand" evidence="6">
    <location>
        <begin position="270"/>
        <end position="282"/>
    </location>
</feature>
<feature type="helix" evidence="6">
    <location>
        <begin position="283"/>
        <end position="288"/>
    </location>
</feature>
<feature type="helix" evidence="6">
    <location>
        <begin position="293"/>
        <end position="295"/>
    </location>
</feature>
<feature type="strand" evidence="6">
    <location>
        <begin position="298"/>
        <end position="300"/>
    </location>
</feature>
<feature type="strand" evidence="6">
    <location>
        <begin position="303"/>
        <end position="305"/>
    </location>
</feature>
<feature type="strand" evidence="6">
    <location>
        <begin position="308"/>
        <end position="315"/>
    </location>
</feature>
<feature type="helix" evidence="6">
    <location>
        <begin position="316"/>
        <end position="327"/>
    </location>
</feature>
<feature type="strand" evidence="8">
    <location>
        <begin position="328"/>
        <end position="330"/>
    </location>
</feature>
<feature type="strand" evidence="6">
    <location>
        <begin position="337"/>
        <end position="339"/>
    </location>
</feature>
<feature type="strand" evidence="8">
    <location>
        <begin position="344"/>
        <end position="346"/>
    </location>
</feature>
<feature type="turn" evidence="6">
    <location>
        <begin position="350"/>
        <end position="352"/>
    </location>
</feature>
<feature type="strand" evidence="6">
    <location>
        <begin position="357"/>
        <end position="361"/>
    </location>
</feature>
<feature type="helix" evidence="6">
    <location>
        <begin position="366"/>
        <end position="382"/>
    </location>
</feature>
<feature type="strand" evidence="6">
    <location>
        <begin position="387"/>
        <end position="389"/>
    </location>
</feature>
<feature type="helix" evidence="6">
    <location>
        <begin position="390"/>
        <end position="392"/>
    </location>
</feature>
<feature type="helix" evidence="6">
    <location>
        <begin position="399"/>
        <end position="408"/>
    </location>
</feature>
<feature type="strand" evidence="6">
    <location>
        <begin position="412"/>
        <end position="417"/>
    </location>
</feature>
<feature type="helix" evidence="6">
    <location>
        <begin position="419"/>
        <end position="424"/>
    </location>
</feature>
<feature type="strand" evidence="6">
    <location>
        <begin position="426"/>
        <end position="431"/>
    </location>
</feature>
<feature type="turn" evidence="6">
    <location>
        <begin position="432"/>
        <end position="434"/>
    </location>
</feature>
<feature type="strand" evidence="6">
    <location>
        <begin position="437"/>
        <end position="441"/>
    </location>
</feature>
<feature type="helix" evidence="8">
    <location>
        <begin position="442"/>
        <end position="444"/>
    </location>
</feature>
<feature type="helix" evidence="6">
    <location>
        <begin position="445"/>
        <end position="459"/>
    </location>
</feature>
<gene>
    <name type="primary">Polg2</name>
    <name type="synonym">Mtpolb</name>
</gene>
<sequence length="459" mass="51467">MRCGGGARACRRACRCWLSGYAGPADGTQQPDAPEHAVAREALVDLCRRRHFFSGTPQQLSTAALLSGCHARFGPLGVELRKNLASQWWSSMVVFREQVFAVDSLHQEPGSSQPRDSAFRLVSPESIREILQDREPSKEQLVAFLENLLKTSGKLRATLLHGALEHYVNCLDLVNRKLPFGLAQIGVCFHPVSNSNQTPSSVTRVGEKTEASLVWFTPTRTSSQWLDFWLRHRLLWWRKFAMSPSNFSSADCQDELGRKGSKLYYSFPWGKEPIETLWNLGDQELLHTYPGNVSTIQGRDGRKNVVPCVLSVSGDVDLGTLAYLYDSFQLAENSFARKKSLQRKVLKLHPCLAPIKVALDVGKGPTVELRQVCQGLLNELLENGISVWPGYSETVHSSLEQLHSKYDEMSVLFSVLVTETTLENGLIQLRSRDTTMKEMMHISKLRDFLVKYLASASNV</sequence>